<reference key="1">
    <citation type="journal article" date="2004" name="Science">
        <title>The Ashbya gossypii genome as a tool for mapping the ancient Saccharomyces cerevisiae genome.</title>
        <authorList>
            <person name="Dietrich F.S."/>
            <person name="Voegeli S."/>
            <person name="Brachat S."/>
            <person name="Lerch A."/>
            <person name="Gates K."/>
            <person name="Steiner S."/>
            <person name="Mohr C."/>
            <person name="Poehlmann R."/>
            <person name="Luedi P."/>
            <person name="Choi S."/>
            <person name="Wing R.A."/>
            <person name="Flavier A."/>
            <person name="Gaffney T.D."/>
            <person name="Philippsen P."/>
        </authorList>
    </citation>
    <scope>NUCLEOTIDE SEQUENCE [LARGE SCALE GENOMIC DNA]</scope>
    <source>
        <strain>ATCC 10895 / CBS 109.51 / FGSC 9923 / NRRL Y-1056</strain>
    </source>
</reference>
<reference key="2">
    <citation type="journal article" date="2013" name="G3 (Bethesda)">
        <title>Genomes of Ashbya fungi isolated from insects reveal four mating-type loci, numerous translocations, lack of transposons, and distinct gene duplications.</title>
        <authorList>
            <person name="Dietrich F.S."/>
            <person name="Voegeli S."/>
            <person name="Kuo S."/>
            <person name="Philippsen P."/>
        </authorList>
    </citation>
    <scope>GENOME REANNOTATION</scope>
    <source>
        <strain>ATCC 10895 / CBS 109.51 / FGSC 9923 / NRRL Y-1056</strain>
    </source>
</reference>
<comment type="function">
    <text evidence="1">Involved in cell wall metabolism and required for the separation of the mother and daughter cells.</text>
</comment>
<comment type="similarity">
    <text evidence="3">Belongs to the WD repeat DSE1 family.</text>
</comment>
<comment type="sequence caution" evidence="3">
    <conflict type="erroneous initiation">
        <sequence resource="EMBL-CDS" id="AAS51866"/>
    </conflict>
</comment>
<sequence>MRLSSLGEATAGSAAPAVVCGSRTDLYIACSCTEGQCSRADSMALNERGMQMDRGQARPAVRQPDERERKQRLVNRCFRESRVPDSESSPGTERRTAELSGFYTTKKLRSLYWTLRTDASLTAFAVAQERDTILISNRHHSEENLKLYQYDNVKSKLRRIQTITLPGGSVVACALPGPGFNVVMGEALRRTHDQLILTGHEDAVVNLIATSLEEGDARIIRRFNPAKYLRRLRAQYGDEAADMPWLQEIDSLRVRQLTPWRSVKTDATGFIALVNELIFIYTFDDTREPLYMHHFPGVESFDVNPENELLLALSGSKYGANGISLLDLTKMRGIGRQYAPAGHLKAFERAADSKHCLWLDKSLLVNSVGNILRVWDIRCSTGLKCEVLGHKSNITAVRYHKNSHTLYSCDEDGYIFSWELSHLLRELEGMTDVRRMTLCRSPQSIKTADDCSTTIQCGNIVVAPDTEFSSKRNSSVRSSSSRLGRLHLQFLGDGTLITLDALELGVHKVQDAKCYIAPSKNKLRRHSELPIKTLAPSAVSHAVESDSSLSSDSTLVERAQLEELHHDIFGSGFMSLDLHAEVDHS</sequence>
<evidence type="ECO:0000250" key="1"/>
<evidence type="ECO:0000256" key="2">
    <source>
        <dbReference type="SAM" id="MobiDB-lite"/>
    </source>
</evidence>
<evidence type="ECO:0000305" key="3"/>
<dbReference type="EMBL" id="AE016817">
    <property type="protein sequence ID" value="AAS51866.1"/>
    <property type="status" value="ALT_INIT"/>
    <property type="molecule type" value="Genomic_DNA"/>
</dbReference>
<dbReference type="RefSeq" id="NP_984042.1">
    <property type="nucleotide sequence ID" value="NM_209395.1"/>
</dbReference>
<dbReference type="FunCoup" id="Q75AI1">
    <property type="interactions" value="41"/>
</dbReference>
<dbReference type="STRING" id="284811.Q75AI1"/>
<dbReference type="GeneID" id="4620184"/>
<dbReference type="KEGG" id="ago:AGOS_ADL054W"/>
<dbReference type="eggNOG" id="ENOG502QTST">
    <property type="taxonomic scope" value="Eukaryota"/>
</dbReference>
<dbReference type="InParanoid" id="Q75AI1"/>
<dbReference type="OrthoDB" id="361494at2759"/>
<dbReference type="Proteomes" id="UP000000591">
    <property type="component" value="Chromosome IV"/>
</dbReference>
<dbReference type="GO" id="GO:0030864">
    <property type="term" value="C:cortical actin cytoskeleton"/>
    <property type="evidence" value="ECO:0000318"/>
    <property type="project" value="GO_Central"/>
</dbReference>
<dbReference type="GO" id="GO:0051015">
    <property type="term" value="F:actin filament binding"/>
    <property type="evidence" value="ECO:0000318"/>
    <property type="project" value="GO_Central"/>
</dbReference>
<dbReference type="GO" id="GO:0030042">
    <property type="term" value="P:actin filament depolymerization"/>
    <property type="evidence" value="ECO:0000318"/>
    <property type="project" value="GO_Central"/>
</dbReference>
<dbReference type="GO" id="GO:0051301">
    <property type="term" value="P:cell division"/>
    <property type="evidence" value="ECO:0007669"/>
    <property type="project" value="UniProtKB-KW"/>
</dbReference>
<dbReference type="GO" id="GO:0071555">
    <property type="term" value="P:cell wall organization"/>
    <property type="evidence" value="ECO:0007669"/>
    <property type="project" value="UniProtKB-KW"/>
</dbReference>
<dbReference type="Gene3D" id="2.130.10.10">
    <property type="entry name" value="YVTN repeat-like/Quinoprotein amine dehydrogenase"/>
    <property type="match status" value="1"/>
</dbReference>
<dbReference type="InterPro" id="IPR015943">
    <property type="entry name" value="WD40/YVTN_repeat-like_dom_sf"/>
</dbReference>
<dbReference type="InterPro" id="IPR019775">
    <property type="entry name" value="WD40_repeat_CS"/>
</dbReference>
<dbReference type="InterPro" id="IPR036322">
    <property type="entry name" value="WD40_repeat_dom_sf"/>
</dbReference>
<dbReference type="InterPro" id="IPR001680">
    <property type="entry name" value="WD40_rpt"/>
</dbReference>
<dbReference type="PANTHER" id="PTHR19856:SF0">
    <property type="entry name" value="WD REPEAT-CONTAINING PROTEIN 1"/>
    <property type="match status" value="1"/>
</dbReference>
<dbReference type="PANTHER" id="PTHR19856">
    <property type="entry name" value="WD-REPEATCONTAINING PROTEIN WDR1"/>
    <property type="match status" value="1"/>
</dbReference>
<dbReference type="Pfam" id="PF00400">
    <property type="entry name" value="WD40"/>
    <property type="match status" value="1"/>
</dbReference>
<dbReference type="SMART" id="SM00320">
    <property type="entry name" value="WD40"/>
    <property type="match status" value="1"/>
</dbReference>
<dbReference type="SUPFAM" id="SSF50978">
    <property type="entry name" value="WD40 repeat-like"/>
    <property type="match status" value="1"/>
</dbReference>
<dbReference type="PROSITE" id="PS00678">
    <property type="entry name" value="WD_REPEATS_1"/>
    <property type="match status" value="1"/>
</dbReference>
<dbReference type="PROSITE" id="PS50082">
    <property type="entry name" value="WD_REPEATS_2"/>
    <property type="match status" value="1"/>
</dbReference>
<dbReference type="PROSITE" id="PS50294">
    <property type="entry name" value="WD_REPEATS_REGION"/>
    <property type="match status" value="1"/>
</dbReference>
<feature type="chain" id="PRO_0000285344" description="Protein DSE1">
    <location>
        <begin position="1"/>
        <end position="585"/>
    </location>
</feature>
<feature type="repeat" description="WD 1">
    <location>
        <begin position="179"/>
        <end position="218"/>
    </location>
</feature>
<feature type="repeat" description="WD 2">
    <location>
        <begin position="346"/>
        <end position="385"/>
    </location>
</feature>
<feature type="repeat" description="WD 3">
    <location>
        <begin position="389"/>
        <end position="428"/>
    </location>
</feature>
<feature type="region of interest" description="Disordered" evidence="2">
    <location>
        <begin position="50"/>
        <end position="71"/>
    </location>
</feature>
<proteinExistence type="inferred from homology"/>
<gene>
    <name type="primary">DSE1</name>
    <name type="ordered locus">ADL054W</name>
</gene>
<organism>
    <name type="scientific">Eremothecium gossypii (strain ATCC 10895 / CBS 109.51 / FGSC 9923 / NRRL Y-1056)</name>
    <name type="common">Yeast</name>
    <name type="synonym">Ashbya gossypii</name>
    <dbReference type="NCBI Taxonomy" id="284811"/>
    <lineage>
        <taxon>Eukaryota</taxon>
        <taxon>Fungi</taxon>
        <taxon>Dikarya</taxon>
        <taxon>Ascomycota</taxon>
        <taxon>Saccharomycotina</taxon>
        <taxon>Saccharomycetes</taxon>
        <taxon>Saccharomycetales</taxon>
        <taxon>Saccharomycetaceae</taxon>
        <taxon>Eremothecium</taxon>
    </lineage>
</organism>
<name>DSE1_EREGS</name>
<protein>
    <recommendedName>
        <fullName>Protein DSE1</fullName>
    </recommendedName>
    <alternativeName>
        <fullName>Daughter-specific expression protein 1</fullName>
    </alternativeName>
</protein>
<keyword id="KW-0131">Cell cycle</keyword>
<keyword id="KW-0132">Cell division</keyword>
<keyword id="KW-0961">Cell wall biogenesis/degradation</keyword>
<keyword id="KW-1185">Reference proteome</keyword>
<keyword id="KW-0677">Repeat</keyword>
<keyword id="KW-0853">WD repeat</keyword>
<accession>Q75AI1</accession>